<evidence type="ECO:0000255" key="1">
    <source>
        <dbReference type="HAMAP-Rule" id="MF_00063"/>
    </source>
</evidence>
<reference key="1">
    <citation type="submission" date="2009-04" db="EMBL/GenBank/DDBJ databases">
        <title>Genome sequence of Bacillus anthracis A0248.</title>
        <authorList>
            <person name="Dodson R.J."/>
            <person name="Munk A.C."/>
            <person name="Bruce D."/>
            <person name="Detter C."/>
            <person name="Tapia R."/>
            <person name="Sutton G."/>
            <person name="Sims D."/>
            <person name="Brettin T."/>
        </authorList>
    </citation>
    <scope>NUCLEOTIDE SEQUENCE [LARGE SCALE GENOMIC DNA]</scope>
    <source>
        <strain>A0248</strain>
    </source>
</reference>
<proteinExistence type="inferred from homology"/>
<name>CYSH_BACAA</name>
<keyword id="KW-0963">Cytoplasm</keyword>
<keyword id="KW-0408">Iron</keyword>
<keyword id="KW-0411">Iron-sulfur</keyword>
<keyword id="KW-0479">Metal-binding</keyword>
<keyword id="KW-0560">Oxidoreductase</keyword>
<dbReference type="EC" id="1.8.4.10" evidence="1"/>
<dbReference type="EMBL" id="CP001598">
    <property type="protein sequence ID" value="ACQ50421.1"/>
    <property type="molecule type" value="Genomic_DNA"/>
</dbReference>
<dbReference type="RefSeq" id="WP_000958999.1">
    <property type="nucleotide sequence ID" value="NC_012659.1"/>
</dbReference>
<dbReference type="SMR" id="C3P516"/>
<dbReference type="GeneID" id="45021420"/>
<dbReference type="KEGG" id="bai:BAA_1510"/>
<dbReference type="HOGENOM" id="CLU_044089_2_1_9"/>
<dbReference type="GO" id="GO:0005737">
    <property type="term" value="C:cytoplasm"/>
    <property type="evidence" value="ECO:0007669"/>
    <property type="project" value="UniProtKB-SubCell"/>
</dbReference>
<dbReference type="GO" id="GO:0051539">
    <property type="term" value="F:4 iron, 4 sulfur cluster binding"/>
    <property type="evidence" value="ECO:0007669"/>
    <property type="project" value="UniProtKB-UniRule"/>
</dbReference>
<dbReference type="GO" id="GO:0043866">
    <property type="term" value="F:adenylyl-sulfate reductase (thioredoxin) activity"/>
    <property type="evidence" value="ECO:0007669"/>
    <property type="project" value="UniProtKB-EC"/>
</dbReference>
<dbReference type="GO" id="GO:0046872">
    <property type="term" value="F:metal ion binding"/>
    <property type="evidence" value="ECO:0007669"/>
    <property type="project" value="UniProtKB-KW"/>
</dbReference>
<dbReference type="GO" id="GO:0004604">
    <property type="term" value="F:phosphoadenylyl-sulfate reductase (thioredoxin) activity"/>
    <property type="evidence" value="ECO:0007669"/>
    <property type="project" value="UniProtKB-UniRule"/>
</dbReference>
<dbReference type="GO" id="GO:0019344">
    <property type="term" value="P:cysteine biosynthetic process"/>
    <property type="evidence" value="ECO:0007669"/>
    <property type="project" value="InterPro"/>
</dbReference>
<dbReference type="GO" id="GO:0070814">
    <property type="term" value="P:hydrogen sulfide biosynthetic process"/>
    <property type="evidence" value="ECO:0007669"/>
    <property type="project" value="UniProtKB-UniRule"/>
</dbReference>
<dbReference type="GO" id="GO:0019379">
    <property type="term" value="P:sulfate assimilation, phosphoadenylyl sulfate reduction by phosphoadenylyl-sulfate reductase (thioredoxin)"/>
    <property type="evidence" value="ECO:0007669"/>
    <property type="project" value="UniProtKB-UniRule"/>
</dbReference>
<dbReference type="CDD" id="cd23945">
    <property type="entry name" value="PAPS_reductase"/>
    <property type="match status" value="1"/>
</dbReference>
<dbReference type="FunFam" id="3.40.50.620:FF:000095">
    <property type="entry name" value="Phosphoadenosine phosphosulfate reductase"/>
    <property type="match status" value="1"/>
</dbReference>
<dbReference type="Gene3D" id="3.40.50.620">
    <property type="entry name" value="HUPs"/>
    <property type="match status" value="1"/>
</dbReference>
<dbReference type="HAMAP" id="MF_00063">
    <property type="entry name" value="CysH"/>
    <property type="match status" value="1"/>
</dbReference>
<dbReference type="InterPro" id="IPR011798">
    <property type="entry name" value="APS_reductase"/>
</dbReference>
<dbReference type="InterPro" id="IPR004511">
    <property type="entry name" value="PAPS/APS_Rdtase"/>
</dbReference>
<dbReference type="InterPro" id="IPR002500">
    <property type="entry name" value="PAPS_reduct_dom"/>
</dbReference>
<dbReference type="InterPro" id="IPR014729">
    <property type="entry name" value="Rossmann-like_a/b/a_fold"/>
</dbReference>
<dbReference type="NCBIfam" id="TIGR02055">
    <property type="entry name" value="APS_reductase"/>
    <property type="match status" value="1"/>
</dbReference>
<dbReference type="NCBIfam" id="TIGR00434">
    <property type="entry name" value="cysH"/>
    <property type="match status" value="1"/>
</dbReference>
<dbReference type="NCBIfam" id="NF002537">
    <property type="entry name" value="PRK02090.1"/>
    <property type="match status" value="1"/>
</dbReference>
<dbReference type="PANTHER" id="PTHR46509">
    <property type="entry name" value="PHOSPHOADENOSINE PHOSPHOSULFATE REDUCTASE"/>
    <property type="match status" value="1"/>
</dbReference>
<dbReference type="PANTHER" id="PTHR46509:SF1">
    <property type="entry name" value="PHOSPHOADENOSINE PHOSPHOSULFATE REDUCTASE"/>
    <property type="match status" value="1"/>
</dbReference>
<dbReference type="Pfam" id="PF01507">
    <property type="entry name" value="PAPS_reduct"/>
    <property type="match status" value="1"/>
</dbReference>
<dbReference type="PIRSF" id="PIRSF000857">
    <property type="entry name" value="PAPS_reductase"/>
    <property type="match status" value="1"/>
</dbReference>
<dbReference type="SUPFAM" id="SSF52402">
    <property type="entry name" value="Adenine nucleotide alpha hydrolases-like"/>
    <property type="match status" value="1"/>
</dbReference>
<gene>
    <name evidence="1" type="primary">cysH</name>
    <name type="ordered locus">BAA_1510</name>
</gene>
<accession>C3P516</accession>
<feature type="chain" id="PRO_1000117921" description="Adenosine 5'-phosphosulfate reductase">
    <location>
        <begin position="1"/>
        <end position="226"/>
    </location>
</feature>
<feature type="active site" description="Nucleophile; cysteine thiosulfonate intermediate" evidence="1">
    <location>
        <position position="221"/>
    </location>
</feature>
<feature type="binding site" evidence="1">
    <location>
        <position position="112"/>
    </location>
    <ligand>
        <name>[4Fe-4S] cluster</name>
        <dbReference type="ChEBI" id="CHEBI:49883"/>
    </ligand>
</feature>
<feature type="binding site" evidence="1">
    <location>
        <position position="113"/>
    </location>
    <ligand>
        <name>[4Fe-4S] cluster</name>
        <dbReference type="ChEBI" id="CHEBI:49883"/>
    </ligand>
</feature>
<feature type="binding site" evidence="1">
    <location>
        <position position="195"/>
    </location>
    <ligand>
        <name>[4Fe-4S] cluster</name>
        <dbReference type="ChEBI" id="CHEBI:49883"/>
    </ligand>
</feature>
<feature type="binding site" evidence="1">
    <location>
        <position position="198"/>
    </location>
    <ligand>
        <name>[4Fe-4S] cluster</name>
        <dbReference type="ChEBI" id="CHEBI:49883"/>
    </ligand>
</feature>
<comment type="function">
    <text evidence="1">Catalyzes the formation of sulfite from adenosine 5'-phosphosulfate (APS) using thioredoxin as an electron donor.</text>
</comment>
<comment type="catalytic activity">
    <reaction evidence="1">
        <text>[thioredoxin]-disulfide + sulfite + AMP + 2 H(+) = adenosine 5'-phosphosulfate + [thioredoxin]-dithiol</text>
        <dbReference type="Rhea" id="RHEA:21976"/>
        <dbReference type="Rhea" id="RHEA-COMP:10698"/>
        <dbReference type="Rhea" id="RHEA-COMP:10700"/>
        <dbReference type="ChEBI" id="CHEBI:15378"/>
        <dbReference type="ChEBI" id="CHEBI:17359"/>
        <dbReference type="ChEBI" id="CHEBI:29950"/>
        <dbReference type="ChEBI" id="CHEBI:50058"/>
        <dbReference type="ChEBI" id="CHEBI:58243"/>
        <dbReference type="ChEBI" id="CHEBI:456215"/>
        <dbReference type="EC" id="1.8.4.10"/>
    </reaction>
</comment>
<comment type="cofactor">
    <cofactor evidence="1">
        <name>[4Fe-4S] cluster</name>
        <dbReference type="ChEBI" id="CHEBI:49883"/>
    </cofactor>
    <text evidence="1">Binds 1 [4Fe-4S] cluster per subunit.</text>
</comment>
<comment type="pathway">
    <text evidence="1">Sulfur metabolism; hydrogen sulfide biosynthesis; sulfite from sulfate.</text>
</comment>
<comment type="subcellular location">
    <subcellularLocation>
        <location evidence="1">Cytoplasm</location>
    </subcellularLocation>
</comment>
<comment type="similarity">
    <text evidence="1">Belongs to the PAPS reductase family. CysH subfamily.</text>
</comment>
<organism>
    <name type="scientific">Bacillus anthracis (strain A0248)</name>
    <dbReference type="NCBI Taxonomy" id="592021"/>
    <lineage>
        <taxon>Bacteria</taxon>
        <taxon>Bacillati</taxon>
        <taxon>Bacillota</taxon>
        <taxon>Bacilli</taxon>
        <taxon>Bacillales</taxon>
        <taxon>Bacillaceae</taxon>
        <taxon>Bacillus</taxon>
        <taxon>Bacillus cereus group</taxon>
    </lineage>
</organism>
<protein>
    <recommendedName>
        <fullName evidence="1">Adenosine 5'-phosphosulfate reductase</fullName>
        <shortName evidence="1">APS reductase</shortName>
        <ecNumber evidence="1">1.8.4.10</ecNumber>
    </recommendedName>
    <alternativeName>
        <fullName evidence="1">5'-adenylylsulfate reductase</fullName>
    </alternativeName>
    <alternativeName>
        <fullName evidence="1">Thioredoxin-dependent 5'-adenylylsulfate reductase</fullName>
    </alternativeName>
</protein>
<sequence>MLTYETWEENETKGALSVLSWAYKEYKSEIVYACSFGVEGMVLLDLINQVNPSAKVVFLDTNVHFQETYELIQKVRERFPSLNIIEKQPKLTLDEQDKLHGDKLWESNPNLCCKIRKILPLEESLANEKAWISGLRREQSETRKHTKFINQDHRFQSIKVCPLIHWTWKEVWRYVYKHSLPYNSLHDIGYPSIGCEKCTLPVGEGGDSRDGRWAGKVKTECGLHYQ</sequence>